<protein>
    <recommendedName>
        <fullName evidence="1">Chaperone protein HtpG</fullName>
    </recommendedName>
    <alternativeName>
        <fullName evidence="1">Heat shock protein HtpG</fullName>
    </alternativeName>
    <alternativeName>
        <fullName evidence="1">High temperature protein G</fullName>
    </alternativeName>
</protein>
<sequence>MSTNQETRGFQSEVKQLLQLMIHSLYSNKEIFLRELISNASDAADKLRFKALSNPALYEGDGELRVRVSFDETLGTLTISDNGIGMNREQVIDHLGTIAKSGTKEFLNSLGTDQAKDSQLIGQFGVGFYSAFIVADKVTVKTRAAGETQAVLWESAGEGDYTVADIEKATRGTDVILHLREEEKEFLSEWRLREIIGKYSDHIGLPVEIQTTEYNEEGKASGQKWEKINKAQALWTRSKNEISDEEYQEFYKHLSHDYNDSLIWAHNKVEGKQEYTSLLYVPAKAPWDMFNREQKHGLKLYVQRVFIMDDAEVFMPNYLRFMRGLLDTNDLPLNVSREILQENKITASLRAALTKRALQLLEKLAKDDQAKYQTFWNEFGLVLKEGVGEDFANKQQIASLFRFASTQTDSSEQTVSLADYVGRMKEGQKAIYFLTADSYVAAKNSPHLELFNKKGIEVLLLSDRIDEWVVGHLTEFDGKPLQSITKSDLDLGDLADKEQEESQKAQQAEFGSFLERAQSYFGERVKKVVLTHRLTDTPAVVSTDNDEMTTQMAKLFAAMGQKAPEVKYTFELNPDHQMVKKIADLTDETEFNDWIELLFEQALLAERGSLENPAAFIKRMNKLLG</sequence>
<dbReference type="EMBL" id="CP000687">
    <property type="protein sequence ID" value="ABY69562.1"/>
    <property type="molecule type" value="Genomic_DNA"/>
</dbReference>
<dbReference type="RefSeq" id="WP_012263047.1">
    <property type="nucleotide sequence ID" value="NC_010278.1"/>
</dbReference>
<dbReference type="SMR" id="B0BPS7"/>
<dbReference type="KEGG" id="apj:APJL_1004"/>
<dbReference type="HOGENOM" id="CLU_006684_3_0_6"/>
<dbReference type="Proteomes" id="UP000008547">
    <property type="component" value="Chromosome"/>
</dbReference>
<dbReference type="GO" id="GO:0005737">
    <property type="term" value="C:cytoplasm"/>
    <property type="evidence" value="ECO:0007669"/>
    <property type="project" value="UniProtKB-SubCell"/>
</dbReference>
<dbReference type="GO" id="GO:0005524">
    <property type="term" value="F:ATP binding"/>
    <property type="evidence" value="ECO:0007669"/>
    <property type="project" value="UniProtKB-UniRule"/>
</dbReference>
<dbReference type="GO" id="GO:0016887">
    <property type="term" value="F:ATP hydrolysis activity"/>
    <property type="evidence" value="ECO:0007669"/>
    <property type="project" value="InterPro"/>
</dbReference>
<dbReference type="GO" id="GO:0140662">
    <property type="term" value="F:ATP-dependent protein folding chaperone"/>
    <property type="evidence" value="ECO:0007669"/>
    <property type="project" value="InterPro"/>
</dbReference>
<dbReference type="GO" id="GO:0051082">
    <property type="term" value="F:unfolded protein binding"/>
    <property type="evidence" value="ECO:0007669"/>
    <property type="project" value="UniProtKB-UniRule"/>
</dbReference>
<dbReference type="CDD" id="cd16927">
    <property type="entry name" value="HATPase_Hsp90-like"/>
    <property type="match status" value="1"/>
</dbReference>
<dbReference type="FunFam" id="3.30.230.80:FF:000002">
    <property type="entry name" value="Molecular chaperone HtpG"/>
    <property type="match status" value="1"/>
</dbReference>
<dbReference type="FunFam" id="3.30.565.10:FF:000009">
    <property type="entry name" value="Molecular chaperone HtpG"/>
    <property type="match status" value="1"/>
</dbReference>
<dbReference type="FunFam" id="3.40.50.11260:FF:000002">
    <property type="entry name" value="Molecular chaperone HtpG"/>
    <property type="match status" value="1"/>
</dbReference>
<dbReference type="Gene3D" id="3.30.230.80">
    <property type="match status" value="1"/>
</dbReference>
<dbReference type="Gene3D" id="3.40.50.11260">
    <property type="match status" value="1"/>
</dbReference>
<dbReference type="Gene3D" id="1.20.120.790">
    <property type="entry name" value="Heat shock protein 90, C-terminal domain"/>
    <property type="match status" value="1"/>
</dbReference>
<dbReference type="Gene3D" id="3.30.565.10">
    <property type="entry name" value="Histidine kinase-like ATPase, C-terminal domain"/>
    <property type="match status" value="1"/>
</dbReference>
<dbReference type="HAMAP" id="MF_00505">
    <property type="entry name" value="HSP90"/>
    <property type="match status" value="1"/>
</dbReference>
<dbReference type="InterPro" id="IPR036890">
    <property type="entry name" value="HATPase_C_sf"/>
</dbReference>
<dbReference type="InterPro" id="IPR019805">
    <property type="entry name" value="Heat_shock_protein_90_CS"/>
</dbReference>
<dbReference type="InterPro" id="IPR037196">
    <property type="entry name" value="HSP90_C"/>
</dbReference>
<dbReference type="InterPro" id="IPR001404">
    <property type="entry name" value="Hsp90_fam"/>
</dbReference>
<dbReference type="InterPro" id="IPR020575">
    <property type="entry name" value="Hsp90_N"/>
</dbReference>
<dbReference type="InterPro" id="IPR020568">
    <property type="entry name" value="Ribosomal_Su5_D2-typ_SF"/>
</dbReference>
<dbReference type="NCBIfam" id="NF003555">
    <property type="entry name" value="PRK05218.1"/>
    <property type="match status" value="1"/>
</dbReference>
<dbReference type="PANTHER" id="PTHR11528">
    <property type="entry name" value="HEAT SHOCK PROTEIN 90 FAMILY MEMBER"/>
    <property type="match status" value="1"/>
</dbReference>
<dbReference type="Pfam" id="PF13589">
    <property type="entry name" value="HATPase_c_3"/>
    <property type="match status" value="1"/>
</dbReference>
<dbReference type="Pfam" id="PF00183">
    <property type="entry name" value="HSP90"/>
    <property type="match status" value="1"/>
</dbReference>
<dbReference type="PIRSF" id="PIRSF002583">
    <property type="entry name" value="Hsp90"/>
    <property type="match status" value="1"/>
</dbReference>
<dbReference type="PRINTS" id="PR00775">
    <property type="entry name" value="HEATSHOCK90"/>
</dbReference>
<dbReference type="SMART" id="SM00387">
    <property type="entry name" value="HATPase_c"/>
    <property type="match status" value="1"/>
</dbReference>
<dbReference type="SUPFAM" id="SSF55874">
    <property type="entry name" value="ATPase domain of HSP90 chaperone/DNA topoisomerase II/histidine kinase"/>
    <property type="match status" value="1"/>
</dbReference>
<dbReference type="SUPFAM" id="SSF110942">
    <property type="entry name" value="HSP90 C-terminal domain"/>
    <property type="match status" value="1"/>
</dbReference>
<dbReference type="SUPFAM" id="SSF54211">
    <property type="entry name" value="Ribosomal protein S5 domain 2-like"/>
    <property type="match status" value="1"/>
</dbReference>
<dbReference type="PROSITE" id="PS00298">
    <property type="entry name" value="HSP90"/>
    <property type="match status" value="1"/>
</dbReference>
<keyword id="KW-0067">ATP-binding</keyword>
<keyword id="KW-0143">Chaperone</keyword>
<keyword id="KW-0963">Cytoplasm</keyword>
<keyword id="KW-0547">Nucleotide-binding</keyword>
<keyword id="KW-0346">Stress response</keyword>
<evidence type="ECO:0000255" key="1">
    <source>
        <dbReference type="HAMAP-Rule" id="MF_00505"/>
    </source>
</evidence>
<comment type="function">
    <text evidence="1">Molecular chaperone. Has ATPase activity.</text>
</comment>
<comment type="subunit">
    <text evidence="1">Homodimer.</text>
</comment>
<comment type="subcellular location">
    <subcellularLocation>
        <location evidence="1">Cytoplasm</location>
    </subcellularLocation>
</comment>
<comment type="similarity">
    <text evidence="1">Belongs to the heat shock protein 90 family.</text>
</comment>
<reference key="1">
    <citation type="journal article" date="2008" name="PLoS ONE">
        <title>Genome biology of Actinobacillus pleuropneumoniae JL03, an isolate of serotype 3 prevalent in China.</title>
        <authorList>
            <person name="Xu Z."/>
            <person name="Zhou Y."/>
            <person name="Li L."/>
            <person name="Zhou R."/>
            <person name="Xiao S."/>
            <person name="Wan Y."/>
            <person name="Zhang S."/>
            <person name="Wang K."/>
            <person name="Li W."/>
            <person name="Li L."/>
            <person name="Jin H."/>
            <person name="Kang M."/>
            <person name="Dalai B."/>
            <person name="Li T."/>
            <person name="Liu L."/>
            <person name="Cheng Y."/>
            <person name="Zhang L."/>
            <person name="Xu T."/>
            <person name="Zheng H."/>
            <person name="Pu S."/>
            <person name="Wang B."/>
            <person name="Gu W."/>
            <person name="Zhang X.L."/>
            <person name="Zhu G.-F."/>
            <person name="Wang S."/>
            <person name="Zhao G.-P."/>
            <person name="Chen H."/>
        </authorList>
    </citation>
    <scope>NUCLEOTIDE SEQUENCE [LARGE SCALE GENOMIC DNA]</scope>
    <source>
        <strain>JL03</strain>
    </source>
</reference>
<gene>
    <name evidence="1" type="primary">htpG</name>
    <name type="ordered locus">APJL_1004</name>
</gene>
<proteinExistence type="inferred from homology"/>
<feature type="chain" id="PRO_1000127024" description="Chaperone protein HtpG">
    <location>
        <begin position="1"/>
        <end position="625"/>
    </location>
</feature>
<feature type="region of interest" description="A; substrate-binding" evidence="1">
    <location>
        <begin position="1"/>
        <end position="337"/>
    </location>
</feature>
<feature type="region of interest" description="B" evidence="1">
    <location>
        <begin position="338"/>
        <end position="554"/>
    </location>
</feature>
<feature type="region of interest" description="C" evidence="1">
    <location>
        <begin position="555"/>
        <end position="625"/>
    </location>
</feature>
<accession>B0BPS7</accession>
<organism>
    <name type="scientific">Actinobacillus pleuropneumoniae serotype 3 (strain JL03)</name>
    <dbReference type="NCBI Taxonomy" id="434271"/>
    <lineage>
        <taxon>Bacteria</taxon>
        <taxon>Pseudomonadati</taxon>
        <taxon>Pseudomonadota</taxon>
        <taxon>Gammaproteobacteria</taxon>
        <taxon>Pasteurellales</taxon>
        <taxon>Pasteurellaceae</taxon>
        <taxon>Actinobacillus</taxon>
    </lineage>
</organism>
<name>HTPG_ACTPJ</name>